<comment type="function">
    <text evidence="1">Plays a role for multiplication of the virus in different cell types.</text>
</comment>
<comment type="similarity">
    <text evidence="2">Belongs to the poxviridae C7 protein family.</text>
</comment>
<sequence length="158" mass="18559">MGIQHKLDVFIVSENIAIKDANLLNGDSYGCTIKLKLNTKKSVRFVVLLEPEWIDEIKPMYMKLNGVSVDLKLDYKDAIKRIYSVDLVLYSDSVIHLFSDTDERYTCEYPTIKVNMIKKYYHVQHRGTTCVHIESPINVSDKYWFMKRDGWYVDRTHS</sequence>
<evidence type="ECO:0000250" key="1"/>
<evidence type="ECO:0000305" key="2"/>
<reference key="1">
    <citation type="journal article" date="1999" name="Virology">
        <title>The complete genome sequence of shope (Rabbit) fibroma virus.</title>
        <authorList>
            <person name="Willer D.O."/>
            <person name="McFadden G."/>
            <person name="Evans D.H."/>
        </authorList>
    </citation>
    <scope>NUCLEOTIDE SEQUENCE [LARGE SCALE GENOMIC DNA]</scope>
</reference>
<gene>
    <name type="ordered locus">s062R</name>
</gene>
<organism>
    <name type="scientific">Rabbit fibroma virus (strain Kasza)</name>
    <name type="common">RFV</name>
    <name type="synonym">Shope fibroma virus (strain Kasza)</name>
    <dbReference type="NCBI Taxonomy" id="10272"/>
    <lineage>
        <taxon>Viruses</taxon>
        <taxon>Varidnaviria</taxon>
        <taxon>Bamfordvirae</taxon>
        <taxon>Nucleocytoviricota</taxon>
        <taxon>Pokkesviricetes</taxon>
        <taxon>Chitovirales</taxon>
        <taxon>Poxviridae</taxon>
        <taxon>Chordopoxvirinae</taxon>
        <taxon>Leporipoxvirus</taxon>
        <taxon>Rabbit fibroma virus</taxon>
    </lineage>
</organism>
<accession>Q9Q909</accession>
<proteinExistence type="inferred from homology"/>
<feature type="chain" id="PRO_0000099400" description="Probable host range protein 2-1">
    <location>
        <begin position="1"/>
        <end position="158"/>
    </location>
</feature>
<dbReference type="EMBL" id="AF170722">
    <property type="protein sequence ID" value="AAF17944.1"/>
    <property type="molecule type" value="Genomic_DNA"/>
</dbReference>
<dbReference type="RefSeq" id="NP_051951.1">
    <property type="nucleotide sequence ID" value="NC_001266.1"/>
</dbReference>
<dbReference type="SMR" id="Q9Q909"/>
<dbReference type="KEGG" id="vg:1486905"/>
<dbReference type="Proteomes" id="UP000000868">
    <property type="component" value="Segment"/>
</dbReference>
<dbReference type="GO" id="GO:0016032">
    <property type="term" value="P:viral process"/>
    <property type="evidence" value="ECO:0007669"/>
    <property type="project" value="InterPro"/>
</dbReference>
<dbReference type="InterPro" id="IPR004967">
    <property type="entry name" value="Poxvirus_C7/F8A"/>
</dbReference>
<dbReference type="Pfam" id="PF03287">
    <property type="entry name" value="Pox_C7_F8A"/>
    <property type="match status" value="1"/>
</dbReference>
<dbReference type="PIRSF" id="PIRSF003779">
    <property type="entry name" value="VAC_C7L"/>
    <property type="match status" value="1"/>
</dbReference>
<keyword id="KW-1185">Reference proteome</keyword>
<name>VH21_RFVKA</name>
<organismHost>
    <name type="scientific">Oryctolagus cuniculus</name>
    <name type="common">Rabbit</name>
    <dbReference type="NCBI Taxonomy" id="9986"/>
</organismHost>
<protein>
    <recommendedName>
        <fullName>Probable host range protein 2-1</fullName>
    </recommendedName>
</protein>